<comment type="function">
    <text evidence="1">Condensation of UDP-2,3-diacylglucosamine and 2,3-diacylglucosamine-1-phosphate to form lipid A disaccharide, a precursor of lipid A, a phosphorylated glycolipid that anchors the lipopolysaccharide to the outer membrane of the cell.</text>
</comment>
<comment type="catalytic activity">
    <reaction evidence="1">
        <text>a lipid X + a UDP-2-N,3-O-bis[(3R)-3-hydroxyacyl]-alpha-D-glucosamine = a lipid A disaccharide + UDP + H(+)</text>
        <dbReference type="Rhea" id="RHEA:67828"/>
        <dbReference type="ChEBI" id="CHEBI:15378"/>
        <dbReference type="ChEBI" id="CHEBI:58223"/>
        <dbReference type="ChEBI" id="CHEBI:137748"/>
        <dbReference type="ChEBI" id="CHEBI:176338"/>
        <dbReference type="ChEBI" id="CHEBI:176343"/>
        <dbReference type="EC" id="2.4.1.182"/>
    </reaction>
</comment>
<comment type="pathway">
    <text evidence="1">Bacterial outer membrane biogenesis; LPS lipid A biosynthesis.</text>
</comment>
<comment type="similarity">
    <text evidence="1">Belongs to the LpxB family.</text>
</comment>
<evidence type="ECO:0000255" key="1">
    <source>
        <dbReference type="HAMAP-Rule" id="MF_00392"/>
    </source>
</evidence>
<feature type="chain" id="PRO_0000255218" description="Lipid-A-disaccharide synthase">
    <location>
        <begin position="1"/>
        <end position="390"/>
    </location>
</feature>
<gene>
    <name evidence="1" type="primary">lpxB</name>
    <name type="ordered locus">RF_0519</name>
</gene>
<organism>
    <name type="scientific">Rickettsia felis (strain ATCC VR-1525 / URRWXCal2)</name>
    <name type="common">Rickettsia azadi</name>
    <dbReference type="NCBI Taxonomy" id="315456"/>
    <lineage>
        <taxon>Bacteria</taxon>
        <taxon>Pseudomonadati</taxon>
        <taxon>Pseudomonadota</taxon>
        <taxon>Alphaproteobacteria</taxon>
        <taxon>Rickettsiales</taxon>
        <taxon>Rickettsiaceae</taxon>
        <taxon>Rickettsieae</taxon>
        <taxon>Rickettsia</taxon>
        <taxon>spotted fever group</taxon>
    </lineage>
</organism>
<sequence length="390" mass="44462">MTKIYFIAGETSGDFIGGRIIQHLKDNIEIKCMGVGGKYMEEAGSFKSLFSITSINLMGFVEILPHIFKLKKLIDKTVEDITNSRADLLITIDSPGFTYRVAKRVRKLLPKLKMIHIVAPSVWAYKEDRAVKYAQIYDCLFALLPFEPPYFTRLGLDCRYIGHPIMEQEFYSDKVALRKEFKIDENERVLCVTLGSRKGEILRHLPVFVSSIEEIFKSCNNLKVIFTLANPAHEAIIKPFLEDVKFNYLFSSERLKTYAVADAALAKSGTNTLEIAASGTPMIVAYKVNLISFFIIRLLIKIKYVTLINIIAGSEIIPEFIQFNCRASLISNKLQELLFNSKKAYEQVIESQKILQKLGFESNRSPSYIAAEIIKQEFLKPKIKLLKEKD</sequence>
<proteinExistence type="inferred from homology"/>
<reference key="1">
    <citation type="journal article" date="2005" name="PLoS Biol.">
        <title>The genome sequence of Rickettsia felis identifies the first putative conjugative plasmid in an obligate intracellular parasite.</title>
        <authorList>
            <person name="Ogata H."/>
            <person name="Renesto P."/>
            <person name="Audic S."/>
            <person name="Robert C."/>
            <person name="Blanc G."/>
            <person name="Fournier P.-E."/>
            <person name="Parinello H."/>
            <person name="Claverie J.-M."/>
            <person name="Raoult D."/>
        </authorList>
    </citation>
    <scope>NUCLEOTIDE SEQUENCE [LARGE SCALE GENOMIC DNA]</scope>
    <source>
        <strain>ATCC VR-1525 / URRWXCal2</strain>
    </source>
</reference>
<accession>Q4UJN0</accession>
<dbReference type="EC" id="2.4.1.182" evidence="1"/>
<dbReference type="EMBL" id="CP000053">
    <property type="protein sequence ID" value="AAY61370.1"/>
    <property type="molecule type" value="Genomic_DNA"/>
</dbReference>
<dbReference type="SMR" id="Q4UJN0"/>
<dbReference type="STRING" id="315456.RF_0519"/>
<dbReference type="CAZy" id="GT19">
    <property type="family name" value="Glycosyltransferase Family 19"/>
</dbReference>
<dbReference type="KEGG" id="rfe:RF_0519"/>
<dbReference type="eggNOG" id="COG0763">
    <property type="taxonomic scope" value="Bacteria"/>
</dbReference>
<dbReference type="HOGENOM" id="CLU_036577_2_0_5"/>
<dbReference type="OrthoDB" id="9801642at2"/>
<dbReference type="UniPathway" id="UPA00973"/>
<dbReference type="Proteomes" id="UP000008548">
    <property type="component" value="Chromosome"/>
</dbReference>
<dbReference type="GO" id="GO:0016020">
    <property type="term" value="C:membrane"/>
    <property type="evidence" value="ECO:0007669"/>
    <property type="project" value="GOC"/>
</dbReference>
<dbReference type="GO" id="GO:0008915">
    <property type="term" value="F:lipid-A-disaccharide synthase activity"/>
    <property type="evidence" value="ECO:0007669"/>
    <property type="project" value="UniProtKB-UniRule"/>
</dbReference>
<dbReference type="GO" id="GO:0005543">
    <property type="term" value="F:phospholipid binding"/>
    <property type="evidence" value="ECO:0007669"/>
    <property type="project" value="TreeGrafter"/>
</dbReference>
<dbReference type="GO" id="GO:0009245">
    <property type="term" value="P:lipid A biosynthetic process"/>
    <property type="evidence" value="ECO:0007669"/>
    <property type="project" value="UniProtKB-UniRule"/>
</dbReference>
<dbReference type="HAMAP" id="MF_00392">
    <property type="entry name" value="LpxB"/>
    <property type="match status" value="1"/>
</dbReference>
<dbReference type="InterPro" id="IPR003835">
    <property type="entry name" value="Glyco_trans_19"/>
</dbReference>
<dbReference type="NCBIfam" id="TIGR00215">
    <property type="entry name" value="lpxB"/>
    <property type="match status" value="1"/>
</dbReference>
<dbReference type="PANTHER" id="PTHR30372">
    <property type="entry name" value="LIPID-A-DISACCHARIDE SYNTHASE"/>
    <property type="match status" value="1"/>
</dbReference>
<dbReference type="PANTHER" id="PTHR30372:SF4">
    <property type="entry name" value="LIPID-A-DISACCHARIDE SYNTHASE, MITOCHONDRIAL-RELATED"/>
    <property type="match status" value="1"/>
</dbReference>
<dbReference type="Pfam" id="PF02684">
    <property type="entry name" value="LpxB"/>
    <property type="match status" value="1"/>
</dbReference>
<dbReference type="SUPFAM" id="SSF53756">
    <property type="entry name" value="UDP-Glycosyltransferase/glycogen phosphorylase"/>
    <property type="match status" value="1"/>
</dbReference>
<name>LPXB_RICFE</name>
<protein>
    <recommendedName>
        <fullName evidence="1">Lipid-A-disaccharide synthase</fullName>
        <ecNumber evidence="1">2.4.1.182</ecNumber>
    </recommendedName>
</protein>
<keyword id="KW-0328">Glycosyltransferase</keyword>
<keyword id="KW-0441">Lipid A biosynthesis</keyword>
<keyword id="KW-0444">Lipid biosynthesis</keyword>
<keyword id="KW-0443">Lipid metabolism</keyword>
<keyword id="KW-0808">Transferase</keyword>